<sequence>EQFEDYGHMRF</sequence>
<keyword id="KW-0027">Amidation</keyword>
<keyword id="KW-0903">Direct protein sequencing</keyword>
<keyword id="KW-0372">Hormone</keyword>
<keyword id="KW-0527">Neuropeptide</keyword>
<keyword id="KW-0964">Secreted</keyword>
<keyword id="KW-0765">Sulfation</keyword>
<name>SK1_BLEDI</name>
<dbReference type="GO" id="GO:0005576">
    <property type="term" value="C:extracellular region"/>
    <property type="evidence" value="ECO:0007669"/>
    <property type="project" value="UniProtKB-SubCell"/>
</dbReference>
<dbReference type="GO" id="GO:0005179">
    <property type="term" value="F:hormone activity"/>
    <property type="evidence" value="ECO:0007669"/>
    <property type="project" value="UniProtKB-KW"/>
</dbReference>
<dbReference type="GO" id="GO:0007218">
    <property type="term" value="P:neuropeptide signaling pathway"/>
    <property type="evidence" value="ECO:0007669"/>
    <property type="project" value="UniProtKB-KW"/>
</dbReference>
<dbReference type="InterPro" id="IPR013152">
    <property type="entry name" value="Gastrin/cholecystokinin_CS"/>
</dbReference>
<dbReference type="InterPro" id="IPR013259">
    <property type="entry name" value="Sulfakinin"/>
</dbReference>
<dbReference type="Pfam" id="PF08257">
    <property type="entry name" value="Sulfakinin"/>
    <property type="match status" value="1"/>
</dbReference>
<dbReference type="PROSITE" id="PS00259">
    <property type="entry name" value="GASTRIN"/>
    <property type="match status" value="1"/>
</dbReference>
<protein>
    <recommendedName>
        <fullName evidence="4">Sulfakinin-1</fullName>
        <shortName evidence="4">BleDi-SK-1</shortName>
    </recommendedName>
</protein>
<organism>
    <name type="scientific">Blepharodera discoidalis</name>
    <name type="common">Cockroach</name>
    <dbReference type="NCBI Taxonomy" id="521524"/>
    <lineage>
        <taxon>Eukaryota</taxon>
        <taxon>Metazoa</taxon>
        <taxon>Ecdysozoa</taxon>
        <taxon>Arthropoda</taxon>
        <taxon>Hexapoda</taxon>
        <taxon>Insecta</taxon>
        <taxon>Pterygota</taxon>
        <taxon>Neoptera</taxon>
        <taxon>Polyneoptera</taxon>
        <taxon>Dictyoptera</taxon>
        <taxon>Blattodea</taxon>
        <taxon>Blaberoidea</taxon>
        <taxon>Blaberidae</taxon>
        <taxon>Epilamprinae</taxon>
        <taxon>Blepharodera</taxon>
    </lineage>
</organism>
<reference evidence="5" key="1">
    <citation type="journal article" date="2009" name="BMC Evol. Biol.">
        <title>A proteomic approach for studying insect phylogeny: CAPA peptides of ancient insect taxa (Dictyoptera, Blattoptera) as a test case.</title>
        <authorList>
            <person name="Roth S."/>
            <person name="Fromm B."/>
            <person name="Gaede G."/>
            <person name="Predel R."/>
        </authorList>
    </citation>
    <scope>PROTEIN SEQUENCE</scope>
    <scope>AMIDATION AT PHE-11</scope>
    <source>
        <tissue evidence="3">Corpora cardiaca</tissue>
    </source>
</reference>
<proteinExistence type="evidence at protein level"/>
<evidence type="ECO:0000250" key="1">
    <source>
        <dbReference type="UniProtKB" id="P41493"/>
    </source>
</evidence>
<evidence type="ECO:0000255" key="2"/>
<evidence type="ECO:0000269" key="3">
    <source>
    </source>
</evidence>
<evidence type="ECO:0000303" key="4">
    <source>
    </source>
</evidence>
<evidence type="ECO:0000305" key="5"/>
<comment type="function">
    <text evidence="1">Myotropic peptide.</text>
</comment>
<comment type="subcellular location">
    <subcellularLocation>
        <location evidence="5">Secreted</location>
    </subcellularLocation>
</comment>
<comment type="similarity">
    <text evidence="2">Belongs to the gastrin/cholecystokinin family.</text>
</comment>
<accession>P85566</accession>
<feature type="peptide" id="PRO_0000378865" description="Sulfakinin-1" evidence="3">
    <location>
        <begin position="1"/>
        <end position="11"/>
    </location>
</feature>
<feature type="modified residue" description="Sulfotyrosine" evidence="1">
    <location>
        <position position="6"/>
    </location>
</feature>
<feature type="modified residue" description="Phenylalanine amide" evidence="3">
    <location>
        <position position="11"/>
    </location>
</feature>